<gene>
    <name evidence="1" type="primary">aroD</name>
    <name type="ordered locus">BLi00939</name>
    <name type="ordered locus">BL00001</name>
</gene>
<name>AROD_BACLD</name>
<protein>
    <recommendedName>
        <fullName evidence="1">3-dehydroquinate dehydratase</fullName>
        <shortName evidence="1">3-dehydroquinase</shortName>
        <ecNumber evidence="1">4.2.1.10</ecNumber>
    </recommendedName>
    <alternativeName>
        <fullName evidence="1">Type I DHQase</fullName>
    </alternativeName>
    <alternativeName>
        <fullName evidence="1">Type I dehydroquinase</fullName>
        <shortName evidence="1">DHQ1</shortName>
    </alternativeName>
</protein>
<keyword id="KW-0028">Amino-acid biosynthesis</keyword>
<keyword id="KW-0057">Aromatic amino acid biosynthesis</keyword>
<keyword id="KW-0456">Lyase</keyword>
<keyword id="KW-1185">Reference proteome</keyword>
<keyword id="KW-0704">Schiff base</keyword>
<evidence type="ECO:0000255" key="1">
    <source>
        <dbReference type="HAMAP-Rule" id="MF_00214"/>
    </source>
</evidence>
<dbReference type="EC" id="4.2.1.10" evidence="1"/>
<dbReference type="EMBL" id="CP000002">
    <property type="protein sequence ID" value="AAU22502.1"/>
    <property type="molecule type" value="Genomic_DNA"/>
</dbReference>
<dbReference type="EMBL" id="AE017333">
    <property type="protein sequence ID" value="AAU39848.1"/>
    <property type="molecule type" value="Genomic_DNA"/>
</dbReference>
<dbReference type="RefSeq" id="WP_003179983.1">
    <property type="nucleotide sequence ID" value="NC_006322.1"/>
</dbReference>
<dbReference type="SMR" id="Q65M66"/>
<dbReference type="STRING" id="279010.BL00001"/>
<dbReference type="GeneID" id="92862484"/>
<dbReference type="KEGG" id="bld:BLi00939"/>
<dbReference type="KEGG" id="bli:BL00001"/>
<dbReference type="eggNOG" id="COG0710">
    <property type="taxonomic scope" value="Bacteria"/>
</dbReference>
<dbReference type="HOGENOM" id="CLU_064444_0_0_9"/>
<dbReference type="UniPathway" id="UPA00053">
    <property type="reaction ID" value="UER00086"/>
</dbReference>
<dbReference type="Proteomes" id="UP000000606">
    <property type="component" value="Chromosome"/>
</dbReference>
<dbReference type="GO" id="GO:0003855">
    <property type="term" value="F:3-dehydroquinate dehydratase activity"/>
    <property type="evidence" value="ECO:0007669"/>
    <property type="project" value="UniProtKB-UniRule"/>
</dbReference>
<dbReference type="GO" id="GO:0046279">
    <property type="term" value="P:3,4-dihydroxybenzoate biosynthetic process"/>
    <property type="evidence" value="ECO:0007669"/>
    <property type="project" value="UniProtKB-ARBA"/>
</dbReference>
<dbReference type="GO" id="GO:0008652">
    <property type="term" value="P:amino acid biosynthetic process"/>
    <property type="evidence" value="ECO:0007669"/>
    <property type="project" value="UniProtKB-KW"/>
</dbReference>
<dbReference type="GO" id="GO:0009073">
    <property type="term" value="P:aromatic amino acid family biosynthetic process"/>
    <property type="evidence" value="ECO:0007669"/>
    <property type="project" value="UniProtKB-KW"/>
</dbReference>
<dbReference type="GO" id="GO:0009423">
    <property type="term" value="P:chorismate biosynthetic process"/>
    <property type="evidence" value="ECO:0007669"/>
    <property type="project" value="UniProtKB-UniRule"/>
</dbReference>
<dbReference type="CDD" id="cd00502">
    <property type="entry name" value="DHQase_I"/>
    <property type="match status" value="1"/>
</dbReference>
<dbReference type="FunFam" id="3.20.20.70:FF:000047">
    <property type="entry name" value="3-dehydroquinate dehydratase"/>
    <property type="match status" value="1"/>
</dbReference>
<dbReference type="Gene3D" id="3.20.20.70">
    <property type="entry name" value="Aldolase class I"/>
    <property type="match status" value="1"/>
</dbReference>
<dbReference type="HAMAP" id="MF_00214">
    <property type="entry name" value="AroD"/>
    <property type="match status" value="1"/>
</dbReference>
<dbReference type="InterPro" id="IPR018508">
    <property type="entry name" value="3-dehydroquinate_DH_AS"/>
</dbReference>
<dbReference type="InterPro" id="IPR013785">
    <property type="entry name" value="Aldolase_TIM"/>
</dbReference>
<dbReference type="InterPro" id="IPR001381">
    <property type="entry name" value="DHquinase_I"/>
</dbReference>
<dbReference type="InterPro" id="IPR050146">
    <property type="entry name" value="Type-I_3-dehydroquinase"/>
</dbReference>
<dbReference type="NCBIfam" id="TIGR01093">
    <property type="entry name" value="aroD"/>
    <property type="match status" value="1"/>
</dbReference>
<dbReference type="PANTHER" id="PTHR43699">
    <property type="entry name" value="3-DEHYDROQUINATE DEHYDRATASE"/>
    <property type="match status" value="1"/>
</dbReference>
<dbReference type="PANTHER" id="PTHR43699:SF1">
    <property type="entry name" value="3-DEHYDROQUINATE DEHYDRATASE"/>
    <property type="match status" value="1"/>
</dbReference>
<dbReference type="Pfam" id="PF01487">
    <property type="entry name" value="DHquinase_I"/>
    <property type="match status" value="1"/>
</dbReference>
<dbReference type="SUPFAM" id="SSF51569">
    <property type="entry name" value="Aldolase"/>
    <property type="match status" value="1"/>
</dbReference>
<dbReference type="PROSITE" id="PS01028">
    <property type="entry name" value="DEHYDROQUINASE_I"/>
    <property type="match status" value="1"/>
</dbReference>
<proteinExistence type="inferred from homology"/>
<accession>Q65M66</accession>
<accession>Q62XK6</accession>
<comment type="function">
    <text evidence="1">Involved in the third step of the chorismate pathway, which leads to the biosynthesis of aromatic amino acids. Catalyzes the cis-dehydration of 3-dehydroquinate (DHQ) and introduces the first double bond of the aromatic ring to yield 3-dehydroshikimate.</text>
</comment>
<comment type="catalytic activity">
    <reaction evidence="1">
        <text>3-dehydroquinate = 3-dehydroshikimate + H2O</text>
        <dbReference type="Rhea" id="RHEA:21096"/>
        <dbReference type="ChEBI" id="CHEBI:15377"/>
        <dbReference type="ChEBI" id="CHEBI:16630"/>
        <dbReference type="ChEBI" id="CHEBI:32364"/>
        <dbReference type="EC" id="4.2.1.10"/>
    </reaction>
</comment>
<comment type="pathway">
    <text evidence="1">Metabolic intermediate biosynthesis; chorismate biosynthesis; chorismate from D-erythrose 4-phosphate and phosphoenolpyruvate: step 3/7.</text>
</comment>
<comment type="subunit">
    <text evidence="1">Homodimer.</text>
</comment>
<comment type="similarity">
    <text evidence="1">Belongs to the type-I 3-dehydroquinase family.</text>
</comment>
<sequence length="254" mass="27695">MKKLVKVRGITLGEGRPKICVPLVGKNLAQLKEEAAYFQTLDADIAEWRADFYEDVDDVDQVCAALAEIRGLLKDTPLIFTFRSAAEGGEKEISTARYFSLNEAVVKTGLADVIDIELFNDEEQVKALVETAHGHEVSVIISNHDFEKTPAAEEIVSRLRKAQELGADLPKIAVMPETTADVLRLLEATCTMNEKYADRPIITMSMAGKGIISRLAGEVFGSAMTFGAAKKASAPGQIAAGELKEILHILHRNL</sequence>
<feature type="chain" id="PRO_0000325519" description="3-dehydroquinate dehydratase">
    <location>
        <begin position="1"/>
        <end position="254"/>
    </location>
</feature>
<feature type="active site" description="Proton donor/acceptor" evidence="1">
    <location>
        <position position="144"/>
    </location>
</feature>
<feature type="active site" description="Schiff-base intermediate with substrate" evidence="1">
    <location>
        <position position="171"/>
    </location>
</feature>
<feature type="binding site" evidence="1">
    <location>
        <begin position="47"/>
        <end position="49"/>
    </location>
    <ligand>
        <name>3-dehydroquinate</name>
        <dbReference type="ChEBI" id="CHEBI:32364"/>
    </ligand>
</feature>
<feature type="binding site" evidence="1">
    <location>
        <position position="83"/>
    </location>
    <ligand>
        <name>3-dehydroquinate</name>
        <dbReference type="ChEBI" id="CHEBI:32364"/>
    </ligand>
</feature>
<feature type="binding site" evidence="1">
    <location>
        <position position="214"/>
    </location>
    <ligand>
        <name>3-dehydroquinate</name>
        <dbReference type="ChEBI" id="CHEBI:32364"/>
    </ligand>
</feature>
<feature type="binding site" evidence="1">
    <location>
        <position position="233"/>
    </location>
    <ligand>
        <name>3-dehydroquinate</name>
        <dbReference type="ChEBI" id="CHEBI:32364"/>
    </ligand>
</feature>
<feature type="binding site" evidence="1">
    <location>
        <position position="237"/>
    </location>
    <ligand>
        <name>3-dehydroquinate</name>
        <dbReference type="ChEBI" id="CHEBI:32364"/>
    </ligand>
</feature>
<reference key="1">
    <citation type="journal article" date="2004" name="J. Mol. Microbiol. Biotechnol.">
        <title>The complete genome sequence of Bacillus licheniformis DSM13, an organism with great industrial potential.</title>
        <authorList>
            <person name="Veith B."/>
            <person name="Herzberg C."/>
            <person name="Steckel S."/>
            <person name="Feesche J."/>
            <person name="Maurer K.H."/>
            <person name="Ehrenreich P."/>
            <person name="Baeumer S."/>
            <person name="Henne A."/>
            <person name="Liesegang H."/>
            <person name="Merkl R."/>
            <person name="Ehrenreich A."/>
            <person name="Gottschalk G."/>
        </authorList>
    </citation>
    <scope>NUCLEOTIDE SEQUENCE [LARGE SCALE GENOMIC DNA]</scope>
    <source>
        <strain>ATCC 14580 / DSM 13 / JCM 2505 / CCUG 7422 / NBRC 12200 / NCIMB 9375 / NCTC 10341 / NRRL NRS-1264 / Gibson 46</strain>
    </source>
</reference>
<reference key="2">
    <citation type="journal article" date="2004" name="Genome Biol.">
        <title>Complete genome sequence of the industrial bacterium Bacillus licheniformis and comparisons with closely related Bacillus species.</title>
        <authorList>
            <person name="Rey M.W."/>
            <person name="Ramaiya P."/>
            <person name="Nelson B.A."/>
            <person name="Brody-Karpin S.D."/>
            <person name="Zaretsky E.J."/>
            <person name="Tang M."/>
            <person name="Lopez de Leon A."/>
            <person name="Xiang H."/>
            <person name="Gusti V."/>
            <person name="Clausen I.G."/>
            <person name="Olsen P.B."/>
            <person name="Rasmussen M.D."/>
            <person name="Andersen J.T."/>
            <person name="Joergensen P.L."/>
            <person name="Larsen T.S."/>
            <person name="Sorokin A."/>
            <person name="Bolotin A."/>
            <person name="Lapidus A."/>
            <person name="Galleron N."/>
            <person name="Ehrlich S.D."/>
            <person name="Berka R.M."/>
        </authorList>
    </citation>
    <scope>NUCLEOTIDE SEQUENCE [LARGE SCALE GENOMIC DNA]</scope>
    <source>
        <strain>ATCC 14580 / DSM 13 / JCM 2505 / CCUG 7422 / NBRC 12200 / NCIMB 9375 / NCTC 10341 / NRRL NRS-1264 / Gibson 46</strain>
    </source>
</reference>
<organism>
    <name type="scientific">Bacillus licheniformis (strain ATCC 14580 / DSM 13 / JCM 2505 / CCUG 7422 / NBRC 12200 / NCIMB 9375 / NCTC 10341 / NRRL NRS-1264 / Gibson 46)</name>
    <dbReference type="NCBI Taxonomy" id="279010"/>
    <lineage>
        <taxon>Bacteria</taxon>
        <taxon>Bacillati</taxon>
        <taxon>Bacillota</taxon>
        <taxon>Bacilli</taxon>
        <taxon>Bacillales</taxon>
        <taxon>Bacillaceae</taxon>
        <taxon>Bacillus</taxon>
    </lineage>
</organism>